<proteinExistence type="inferred from homology"/>
<comment type="function">
    <text evidence="1">Catalyzes the formation of the isocyclic ring in chlorophyll biosynthesis. Mediates the cyclase reaction, which results in the formation of divinylprotochlorophyllide (Pchlide) characteristic of all chlorophylls from magnesium-protoporphyrin IX 13-monomethyl ester (MgPMME).</text>
</comment>
<comment type="catalytic activity">
    <reaction evidence="1">
        <text>Mg-protoporphyrin IX 13-monomethyl ester + 3 NADPH + 3 O2 + 2 H(+) = 3,8-divinyl protochlorophyllide a + 3 NADP(+) + 5 H2O</text>
        <dbReference type="Rhea" id="RHEA:33235"/>
        <dbReference type="ChEBI" id="CHEBI:15377"/>
        <dbReference type="ChEBI" id="CHEBI:15378"/>
        <dbReference type="ChEBI" id="CHEBI:15379"/>
        <dbReference type="ChEBI" id="CHEBI:57783"/>
        <dbReference type="ChEBI" id="CHEBI:58349"/>
        <dbReference type="ChEBI" id="CHEBI:58632"/>
        <dbReference type="ChEBI" id="CHEBI:60491"/>
        <dbReference type="EC" id="1.14.13.81"/>
    </reaction>
</comment>
<comment type="cofactor">
    <cofactor evidence="1">
        <name>Fe cation</name>
        <dbReference type="ChEBI" id="CHEBI:24875"/>
    </cofactor>
</comment>
<comment type="pathway">
    <text evidence="1">Porphyrin-containing compound metabolism; chlorophyll biosynthesis (light-independent).</text>
</comment>
<comment type="subcellular location">
    <subcellularLocation>
        <location>Plastid</location>
        <location>Chloroplast</location>
    </subcellularLocation>
</comment>
<comment type="similarity">
    <text evidence="1">Belongs to the AcsF family.</text>
</comment>
<organism>
    <name type="scientific">Pyropia yezoensis</name>
    <name type="common">Susabi-nori</name>
    <name type="synonym">Porphyra yezoensis</name>
    <dbReference type="NCBI Taxonomy" id="2788"/>
    <lineage>
        <taxon>Eukaryota</taxon>
        <taxon>Rhodophyta</taxon>
        <taxon>Bangiophyceae</taxon>
        <taxon>Bangiales</taxon>
        <taxon>Bangiaceae</taxon>
        <taxon>Pyropia</taxon>
    </lineage>
</organism>
<feature type="chain" id="PRO_0000277208" description="Magnesium-protoporphyrin IX monomethyl ester [oxidative] cyclase">
    <location>
        <begin position="1"/>
        <end position="349"/>
    </location>
</feature>
<dbReference type="EC" id="1.14.13.81" evidence="1"/>
<dbReference type="EMBL" id="AP006715">
    <property type="protein sequence ID" value="BAE92402.1"/>
    <property type="molecule type" value="Genomic_DNA"/>
</dbReference>
<dbReference type="SMR" id="Q1XDK9"/>
<dbReference type="UniPathway" id="UPA00670"/>
<dbReference type="GO" id="GO:0009507">
    <property type="term" value="C:chloroplast"/>
    <property type="evidence" value="ECO:0007669"/>
    <property type="project" value="UniProtKB-SubCell"/>
</dbReference>
<dbReference type="GO" id="GO:0005506">
    <property type="term" value="F:iron ion binding"/>
    <property type="evidence" value="ECO:0007669"/>
    <property type="project" value="UniProtKB-UniRule"/>
</dbReference>
<dbReference type="GO" id="GO:0048529">
    <property type="term" value="F:magnesium-protoporphyrin IX monomethyl ester (oxidative) cyclase activity"/>
    <property type="evidence" value="ECO:0007669"/>
    <property type="project" value="UniProtKB-UniRule"/>
</dbReference>
<dbReference type="GO" id="GO:0036068">
    <property type="term" value="P:light-independent chlorophyll biosynthetic process"/>
    <property type="evidence" value="ECO:0007669"/>
    <property type="project" value="UniProtKB-UniRule"/>
</dbReference>
<dbReference type="GO" id="GO:0015979">
    <property type="term" value="P:photosynthesis"/>
    <property type="evidence" value="ECO:0007669"/>
    <property type="project" value="UniProtKB-UniRule"/>
</dbReference>
<dbReference type="CDD" id="cd01047">
    <property type="entry name" value="ACSF"/>
    <property type="match status" value="1"/>
</dbReference>
<dbReference type="Gene3D" id="1.20.1260.10">
    <property type="match status" value="1"/>
</dbReference>
<dbReference type="HAMAP" id="MF_01840">
    <property type="entry name" value="AcsF"/>
    <property type="match status" value="1"/>
</dbReference>
<dbReference type="InterPro" id="IPR008434">
    <property type="entry name" value="AcsF"/>
</dbReference>
<dbReference type="InterPro" id="IPR012347">
    <property type="entry name" value="Ferritin-like"/>
</dbReference>
<dbReference type="InterPro" id="IPR009078">
    <property type="entry name" value="Ferritin-like_SF"/>
</dbReference>
<dbReference type="InterPro" id="IPR003251">
    <property type="entry name" value="Rr_diiron-bd_dom"/>
</dbReference>
<dbReference type="NCBIfam" id="TIGR02029">
    <property type="entry name" value="AcsF"/>
    <property type="match status" value="1"/>
</dbReference>
<dbReference type="NCBIfam" id="NF010172">
    <property type="entry name" value="PRK13654.1"/>
    <property type="match status" value="1"/>
</dbReference>
<dbReference type="PANTHER" id="PTHR31053">
    <property type="entry name" value="MAGNESIUM-PROTOPORPHYRIN IX MONOMETHYL ESTER [OXIDATIVE] CYCLASE, CHLOROPLASTIC"/>
    <property type="match status" value="1"/>
</dbReference>
<dbReference type="PANTHER" id="PTHR31053:SF2">
    <property type="entry name" value="MAGNESIUM-PROTOPORPHYRIN IX MONOMETHYL ESTER [OXIDATIVE] CYCLASE, CHLOROPLASTIC"/>
    <property type="match status" value="1"/>
</dbReference>
<dbReference type="Pfam" id="PF02915">
    <property type="entry name" value="Rubrerythrin"/>
    <property type="match status" value="1"/>
</dbReference>
<dbReference type="SUPFAM" id="SSF47240">
    <property type="entry name" value="Ferritin-like"/>
    <property type="match status" value="1"/>
</dbReference>
<protein>
    <recommendedName>
        <fullName evidence="1">Magnesium-protoporphyrin IX monomethyl ester [oxidative] cyclase</fullName>
        <shortName evidence="1">Mg-protoporphyrin IX monomethyl ester oxidative cyclase</shortName>
        <ecNumber evidence="1">1.14.13.81</ecNumber>
    </recommendedName>
</protein>
<geneLocation type="chloroplast"/>
<sequence>MQTTINNGQTSSKETLLTPRFYTTDFEEMANMDISGNQEDFLAILEEFRADYNSEHFIRDEEFNQSWSNLEHKTKSLFIEFLERSCTAEFSGFLLYKELSRKLKDRNPVIAECFLLMSRDEARHAGFLNKAIGDFNLSLDLGFLTKSRKYTFFSPKFIFYATYLSEKIGYWRYITIYRHLEQHPEHRIYPIFRFFENWCQDENRHGDFFAALLKSQPHFLNDWKAKMWCRFFLLSVFATMYLNDFQRIDFYNAIGLDSRQYDMQVIRKTNESAARVFPVALDVDNPKFFKYLDTCACDNRALIDIDNNNSPLFIKSIVKIPLYFSLFANLLKIYLIKPIDSKTVWNTVR</sequence>
<reference key="1">
    <citation type="submission" date="2003-11" db="EMBL/GenBank/DDBJ databases">
        <title>Whole genome sequence of Porphyra yezoensis chloroplast.</title>
        <authorList>
            <person name="Kunimoto M."/>
            <person name="Morishima K."/>
            <person name="Yoshikawa M."/>
            <person name="Fukuda S."/>
            <person name="Kobayashi T."/>
            <person name="Kobayashi M."/>
            <person name="Okazaki T."/>
            <person name="Ohara I."/>
            <person name="Nakayama I."/>
        </authorList>
    </citation>
    <scope>NUCLEOTIDE SEQUENCE [LARGE SCALE GENOMIC DNA]</scope>
    <source>
        <strain>U-51</strain>
    </source>
</reference>
<evidence type="ECO:0000255" key="1">
    <source>
        <dbReference type="HAMAP-Rule" id="MF_01840"/>
    </source>
</evidence>
<name>ACSF_PYRYE</name>
<keyword id="KW-0149">Chlorophyll biosynthesis</keyword>
<keyword id="KW-0150">Chloroplast</keyword>
<keyword id="KW-0408">Iron</keyword>
<keyword id="KW-0479">Metal-binding</keyword>
<keyword id="KW-0521">NADP</keyword>
<keyword id="KW-0560">Oxidoreductase</keyword>
<keyword id="KW-0602">Photosynthesis</keyword>
<keyword id="KW-0934">Plastid</keyword>
<accession>Q1XDK9</accession>
<gene>
    <name evidence="1" type="primary">acsF</name>
</gene>